<reference key="1">
    <citation type="submission" date="2006-12" db="EMBL/GenBank/DDBJ databases">
        <title>Complete sequence of chromosome 2 of Paracoccus denitrificans PD1222.</title>
        <authorList>
            <person name="Copeland A."/>
            <person name="Lucas S."/>
            <person name="Lapidus A."/>
            <person name="Barry K."/>
            <person name="Detter J.C."/>
            <person name="Glavina del Rio T."/>
            <person name="Hammon N."/>
            <person name="Israni S."/>
            <person name="Dalin E."/>
            <person name="Tice H."/>
            <person name="Pitluck S."/>
            <person name="Munk A.C."/>
            <person name="Brettin T."/>
            <person name="Bruce D."/>
            <person name="Han C."/>
            <person name="Tapia R."/>
            <person name="Gilna P."/>
            <person name="Schmutz J."/>
            <person name="Larimer F."/>
            <person name="Land M."/>
            <person name="Hauser L."/>
            <person name="Kyrpides N."/>
            <person name="Lykidis A."/>
            <person name="Spiro S."/>
            <person name="Richardson D.J."/>
            <person name="Moir J.W.B."/>
            <person name="Ferguson S.J."/>
            <person name="van Spanning R.J.M."/>
            <person name="Richardson P."/>
        </authorList>
    </citation>
    <scope>NUCLEOTIDE SEQUENCE [LARGE SCALE GENOMIC DNA]</scope>
    <source>
        <strain>Pd 1222</strain>
    </source>
</reference>
<comment type="function">
    <text evidence="1">DNA ligase that catalyzes the formation of phosphodiester linkages between 5'-phosphoryl and 3'-hydroxyl groups in double-stranded DNA using NAD as a coenzyme and as the energy source for the reaction. It is essential for DNA replication and repair of damaged DNA.</text>
</comment>
<comment type="catalytic activity">
    <reaction evidence="1">
        <text>NAD(+) + (deoxyribonucleotide)n-3'-hydroxyl + 5'-phospho-(deoxyribonucleotide)m = (deoxyribonucleotide)n+m + AMP + beta-nicotinamide D-nucleotide.</text>
        <dbReference type="EC" id="6.5.1.2"/>
    </reaction>
</comment>
<comment type="cofactor">
    <cofactor evidence="1">
        <name>Mg(2+)</name>
        <dbReference type="ChEBI" id="CHEBI:18420"/>
    </cofactor>
    <cofactor evidence="1">
        <name>Mn(2+)</name>
        <dbReference type="ChEBI" id="CHEBI:29035"/>
    </cofactor>
</comment>
<comment type="similarity">
    <text evidence="1">Belongs to the NAD-dependent DNA ligase family. LigA subfamily.</text>
</comment>
<evidence type="ECO:0000255" key="1">
    <source>
        <dbReference type="HAMAP-Rule" id="MF_01588"/>
    </source>
</evidence>
<evidence type="ECO:0000256" key="2">
    <source>
        <dbReference type="SAM" id="MobiDB-lite"/>
    </source>
</evidence>
<proteinExistence type="inferred from homology"/>
<gene>
    <name evidence="1" type="primary">ligA</name>
    <name type="ordered locus">Pden_4083</name>
</gene>
<organism>
    <name type="scientific">Paracoccus denitrificans (strain Pd 1222)</name>
    <dbReference type="NCBI Taxonomy" id="318586"/>
    <lineage>
        <taxon>Bacteria</taxon>
        <taxon>Pseudomonadati</taxon>
        <taxon>Pseudomonadota</taxon>
        <taxon>Alphaproteobacteria</taxon>
        <taxon>Rhodobacterales</taxon>
        <taxon>Paracoccaceae</taxon>
        <taxon>Paracoccus</taxon>
    </lineage>
</organism>
<keyword id="KW-0227">DNA damage</keyword>
<keyword id="KW-0234">DNA repair</keyword>
<keyword id="KW-0235">DNA replication</keyword>
<keyword id="KW-0436">Ligase</keyword>
<keyword id="KW-0460">Magnesium</keyword>
<keyword id="KW-0464">Manganese</keyword>
<keyword id="KW-0479">Metal-binding</keyword>
<keyword id="KW-0520">NAD</keyword>
<keyword id="KW-1185">Reference proteome</keyword>
<keyword id="KW-0862">Zinc</keyword>
<sequence>MAGDDEDRAVPAAEGAPPPSALPPVSGLDVKAAEAEHARLSEEVAQANLAYYQEDAPFISDAEYDASKRRLEEIEARFPDLAHSGSPTAQVGAAPDTRFAKVPHRLPMLSLENGFSQGDVEAFVQRVRSFLNLASGAPLEVTAEPKIDGLSLSLRYEGGRLVQAATRGDGAVGENVTANARTIADIPGQLSGDGYPEVLEIRGECYMSHEDFEKLNQSETGRVFANPRNAAAGSLRQLDPSVTAARPLRFFAYAWGEVSASFAGTQMEAVRRMQAFGFQTNPLTRICASVSEMLSAWAEIEQMRATLGYDIDGVVYKVNDLAYQARLGMRSTTPRWALAHKFPAERAWTRLEAIDIQVGRTGALSPVARLHPVTVGGVVVSNATLHNEDYIAGRGADGSEIRGGKDIRIGDWVEVYRAGDVIPKVADVDLAKRPSEAEPYAFPTTCPECGSPAIREEGDSVRRCTGGLICPAQAVEKLRHFVSRAAFDIEGLGAKLVEELFRDGWIAEPADIFTLQDRYGPGQLTQLKNREGWGEKSAASLFQAIEKRREIPLARLLFALGIRHVGEVAAQDLARHYGSWEALEIALDTARPAALAHRVAEDAALAEREAARAEGRRARPSEARAAALAQVDLSPEATAAWTGLIAADGIGPVLAMSLSDAFANERERAAIDRLVSFLTVLPPEARATDSAIAGKTLVFTGTLEKMTRAEAKARAEALGAHVAGSVSAKTDLLIAGPGAGSKAKKAAELGIKVIDEDEWLAIAQG</sequence>
<protein>
    <recommendedName>
        <fullName evidence="1">DNA ligase</fullName>
        <ecNumber evidence="1">6.5.1.2</ecNumber>
    </recommendedName>
    <alternativeName>
        <fullName evidence="1">Polydeoxyribonucleotide synthase [NAD(+)]</fullName>
    </alternativeName>
</protein>
<accession>A1B9F5</accession>
<name>DNLJ_PARDP</name>
<feature type="chain" id="PRO_0000313352" description="DNA ligase">
    <location>
        <begin position="1"/>
        <end position="765"/>
    </location>
</feature>
<feature type="domain" description="BRCT" evidence="1">
    <location>
        <begin position="687"/>
        <end position="765"/>
    </location>
</feature>
<feature type="region of interest" description="Disordered" evidence="2">
    <location>
        <begin position="1"/>
        <end position="34"/>
    </location>
</feature>
<feature type="active site" description="N6-AMP-lysine intermediate" evidence="1">
    <location>
        <position position="146"/>
    </location>
</feature>
<feature type="binding site" evidence="1">
    <location>
        <begin position="61"/>
        <end position="65"/>
    </location>
    <ligand>
        <name>NAD(+)</name>
        <dbReference type="ChEBI" id="CHEBI:57540"/>
    </ligand>
</feature>
<feature type="binding site" evidence="1">
    <location>
        <begin position="110"/>
        <end position="111"/>
    </location>
    <ligand>
        <name>NAD(+)</name>
        <dbReference type="ChEBI" id="CHEBI:57540"/>
    </ligand>
</feature>
<feature type="binding site" evidence="1">
    <location>
        <position position="144"/>
    </location>
    <ligand>
        <name>NAD(+)</name>
        <dbReference type="ChEBI" id="CHEBI:57540"/>
    </ligand>
</feature>
<feature type="binding site" evidence="1">
    <location>
        <position position="167"/>
    </location>
    <ligand>
        <name>NAD(+)</name>
        <dbReference type="ChEBI" id="CHEBI:57540"/>
    </ligand>
</feature>
<feature type="binding site" evidence="1">
    <location>
        <position position="204"/>
    </location>
    <ligand>
        <name>NAD(+)</name>
        <dbReference type="ChEBI" id="CHEBI:57540"/>
    </ligand>
</feature>
<feature type="binding site" evidence="1">
    <location>
        <position position="317"/>
    </location>
    <ligand>
        <name>NAD(+)</name>
        <dbReference type="ChEBI" id="CHEBI:57540"/>
    </ligand>
</feature>
<feature type="binding site" evidence="1">
    <location>
        <position position="341"/>
    </location>
    <ligand>
        <name>NAD(+)</name>
        <dbReference type="ChEBI" id="CHEBI:57540"/>
    </ligand>
</feature>
<feature type="binding site" evidence="1">
    <location>
        <position position="446"/>
    </location>
    <ligand>
        <name>Zn(2+)</name>
        <dbReference type="ChEBI" id="CHEBI:29105"/>
    </ligand>
</feature>
<feature type="binding site" evidence="1">
    <location>
        <position position="449"/>
    </location>
    <ligand>
        <name>Zn(2+)</name>
        <dbReference type="ChEBI" id="CHEBI:29105"/>
    </ligand>
</feature>
<feature type="binding site" evidence="1">
    <location>
        <position position="464"/>
    </location>
    <ligand>
        <name>Zn(2+)</name>
        <dbReference type="ChEBI" id="CHEBI:29105"/>
    </ligand>
</feature>
<feature type="binding site" evidence="1">
    <location>
        <position position="470"/>
    </location>
    <ligand>
        <name>Zn(2+)</name>
        <dbReference type="ChEBI" id="CHEBI:29105"/>
    </ligand>
</feature>
<dbReference type="EC" id="6.5.1.2" evidence="1"/>
<dbReference type="EMBL" id="CP000490">
    <property type="protein sequence ID" value="ABL72149.1"/>
    <property type="molecule type" value="Genomic_DNA"/>
</dbReference>
<dbReference type="RefSeq" id="WP_011750317.1">
    <property type="nucleotide sequence ID" value="NC_008687.1"/>
</dbReference>
<dbReference type="SMR" id="A1B9F5"/>
<dbReference type="STRING" id="318586.Pden_4083"/>
<dbReference type="EnsemblBacteria" id="ABL72149">
    <property type="protein sequence ID" value="ABL72149"/>
    <property type="gene ID" value="Pden_4083"/>
</dbReference>
<dbReference type="GeneID" id="93453748"/>
<dbReference type="KEGG" id="pde:Pden_4083"/>
<dbReference type="eggNOG" id="COG0272">
    <property type="taxonomic scope" value="Bacteria"/>
</dbReference>
<dbReference type="HOGENOM" id="CLU_007764_2_1_5"/>
<dbReference type="OrthoDB" id="9759736at2"/>
<dbReference type="Proteomes" id="UP000000361">
    <property type="component" value="Chromosome 2"/>
</dbReference>
<dbReference type="GO" id="GO:0005829">
    <property type="term" value="C:cytosol"/>
    <property type="evidence" value="ECO:0007669"/>
    <property type="project" value="TreeGrafter"/>
</dbReference>
<dbReference type="GO" id="GO:0003911">
    <property type="term" value="F:DNA ligase (NAD+) activity"/>
    <property type="evidence" value="ECO:0007669"/>
    <property type="project" value="UniProtKB-UniRule"/>
</dbReference>
<dbReference type="GO" id="GO:0046872">
    <property type="term" value="F:metal ion binding"/>
    <property type="evidence" value="ECO:0007669"/>
    <property type="project" value="UniProtKB-KW"/>
</dbReference>
<dbReference type="GO" id="GO:0006281">
    <property type="term" value="P:DNA repair"/>
    <property type="evidence" value="ECO:0007669"/>
    <property type="project" value="UniProtKB-KW"/>
</dbReference>
<dbReference type="GO" id="GO:0006260">
    <property type="term" value="P:DNA replication"/>
    <property type="evidence" value="ECO:0007669"/>
    <property type="project" value="UniProtKB-KW"/>
</dbReference>
<dbReference type="CDD" id="cd17748">
    <property type="entry name" value="BRCT_DNA_ligase_like"/>
    <property type="match status" value="1"/>
</dbReference>
<dbReference type="CDD" id="cd00114">
    <property type="entry name" value="LIGANc"/>
    <property type="match status" value="1"/>
</dbReference>
<dbReference type="FunFam" id="1.10.150.20:FF:000007">
    <property type="entry name" value="DNA ligase"/>
    <property type="match status" value="1"/>
</dbReference>
<dbReference type="FunFam" id="3.30.470.30:FF:000001">
    <property type="entry name" value="DNA ligase"/>
    <property type="match status" value="1"/>
</dbReference>
<dbReference type="Gene3D" id="6.20.10.30">
    <property type="match status" value="1"/>
</dbReference>
<dbReference type="Gene3D" id="1.10.150.20">
    <property type="entry name" value="5' to 3' exonuclease, C-terminal subdomain"/>
    <property type="match status" value="2"/>
</dbReference>
<dbReference type="Gene3D" id="3.40.50.10190">
    <property type="entry name" value="BRCT domain"/>
    <property type="match status" value="1"/>
</dbReference>
<dbReference type="Gene3D" id="3.30.470.30">
    <property type="entry name" value="DNA ligase/mRNA capping enzyme"/>
    <property type="match status" value="1"/>
</dbReference>
<dbReference type="Gene3D" id="1.10.287.610">
    <property type="entry name" value="Helix hairpin bin"/>
    <property type="match status" value="1"/>
</dbReference>
<dbReference type="Gene3D" id="2.40.50.140">
    <property type="entry name" value="Nucleic acid-binding proteins"/>
    <property type="match status" value="1"/>
</dbReference>
<dbReference type="HAMAP" id="MF_01588">
    <property type="entry name" value="DNA_ligase_A"/>
    <property type="match status" value="1"/>
</dbReference>
<dbReference type="InterPro" id="IPR001357">
    <property type="entry name" value="BRCT_dom"/>
</dbReference>
<dbReference type="InterPro" id="IPR036420">
    <property type="entry name" value="BRCT_dom_sf"/>
</dbReference>
<dbReference type="InterPro" id="IPR041663">
    <property type="entry name" value="DisA/LigA_HHH"/>
</dbReference>
<dbReference type="InterPro" id="IPR001679">
    <property type="entry name" value="DNA_ligase"/>
</dbReference>
<dbReference type="InterPro" id="IPR018239">
    <property type="entry name" value="DNA_ligase_AS"/>
</dbReference>
<dbReference type="InterPro" id="IPR033136">
    <property type="entry name" value="DNA_ligase_CS"/>
</dbReference>
<dbReference type="InterPro" id="IPR013839">
    <property type="entry name" value="DNAligase_adenylation"/>
</dbReference>
<dbReference type="InterPro" id="IPR013840">
    <property type="entry name" value="DNAligase_N"/>
</dbReference>
<dbReference type="InterPro" id="IPR012340">
    <property type="entry name" value="NA-bd_OB-fold"/>
</dbReference>
<dbReference type="InterPro" id="IPR004150">
    <property type="entry name" value="NAD_DNA_ligase_OB"/>
</dbReference>
<dbReference type="InterPro" id="IPR010994">
    <property type="entry name" value="RuvA_2-like"/>
</dbReference>
<dbReference type="InterPro" id="IPR004149">
    <property type="entry name" value="Znf_DNAligase_C4"/>
</dbReference>
<dbReference type="NCBIfam" id="TIGR00575">
    <property type="entry name" value="dnlj"/>
    <property type="match status" value="1"/>
</dbReference>
<dbReference type="NCBIfam" id="NF005932">
    <property type="entry name" value="PRK07956.1"/>
    <property type="match status" value="1"/>
</dbReference>
<dbReference type="PANTHER" id="PTHR23389">
    <property type="entry name" value="CHROMOSOME TRANSMISSION FIDELITY FACTOR 18"/>
    <property type="match status" value="1"/>
</dbReference>
<dbReference type="PANTHER" id="PTHR23389:SF9">
    <property type="entry name" value="DNA LIGASE"/>
    <property type="match status" value="1"/>
</dbReference>
<dbReference type="Pfam" id="PF00533">
    <property type="entry name" value="BRCT"/>
    <property type="match status" value="1"/>
</dbReference>
<dbReference type="Pfam" id="PF01653">
    <property type="entry name" value="DNA_ligase_aden"/>
    <property type="match status" value="1"/>
</dbReference>
<dbReference type="Pfam" id="PF03120">
    <property type="entry name" value="DNA_ligase_OB"/>
    <property type="match status" value="1"/>
</dbReference>
<dbReference type="Pfam" id="PF03119">
    <property type="entry name" value="DNA_ligase_ZBD"/>
    <property type="match status" value="1"/>
</dbReference>
<dbReference type="Pfam" id="PF12826">
    <property type="entry name" value="HHH_2"/>
    <property type="match status" value="1"/>
</dbReference>
<dbReference type="PIRSF" id="PIRSF001604">
    <property type="entry name" value="LigA"/>
    <property type="match status" value="1"/>
</dbReference>
<dbReference type="SMART" id="SM00292">
    <property type="entry name" value="BRCT"/>
    <property type="match status" value="1"/>
</dbReference>
<dbReference type="SMART" id="SM00532">
    <property type="entry name" value="LIGANc"/>
    <property type="match status" value="1"/>
</dbReference>
<dbReference type="SUPFAM" id="SSF52113">
    <property type="entry name" value="BRCT domain"/>
    <property type="match status" value="1"/>
</dbReference>
<dbReference type="SUPFAM" id="SSF56091">
    <property type="entry name" value="DNA ligase/mRNA capping enzyme, catalytic domain"/>
    <property type="match status" value="1"/>
</dbReference>
<dbReference type="SUPFAM" id="SSF50249">
    <property type="entry name" value="Nucleic acid-binding proteins"/>
    <property type="match status" value="1"/>
</dbReference>
<dbReference type="SUPFAM" id="SSF47781">
    <property type="entry name" value="RuvA domain 2-like"/>
    <property type="match status" value="1"/>
</dbReference>
<dbReference type="PROSITE" id="PS50172">
    <property type="entry name" value="BRCT"/>
    <property type="match status" value="1"/>
</dbReference>
<dbReference type="PROSITE" id="PS01055">
    <property type="entry name" value="DNA_LIGASE_N1"/>
    <property type="match status" value="1"/>
</dbReference>
<dbReference type="PROSITE" id="PS01056">
    <property type="entry name" value="DNA_LIGASE_N2"/>
    <property type="match status" value="1"/>
</dbReference>